<sequence>MTHLFEGVGVALTTPFTNNKVNIEALKTHVNFLLENNAQAIIVNGTTAESPTLTTDEKERILKTVIDLVDKRVPVIAGTGTNDTEKSIQASIQAKALGADAIMLITPYYNKTNQRGLVKHFEAIADAVKLPVVLYNVPSRTNMTIEPETVEILSQHPYIVALKDATNDFEYLEEVKKRIDTNSFALYSGNDDNVVEYYQRGGQGVISVIANVIPKEFQALYDAQQSGLDIQDQFKPIGTLLSALSVDINPIPIKALTSYLGFGNYELRLPLVSLEDTDTKVLRETYDTFKAGENE</sequence>
<proteinExistence type="inferred from homology"/>
<reference key="1">
    <citation type="journal article" date="2006" name="Lancet">
        <title>Complete genome sequence of USA300, an epidemic clone of community-acquired meticillin-resistant Staphylococcus aureus.</title>
        <authorList>
            <person name="Diep B.A."/>
            <person name="Gill S.R."/>
            <person name="Chang R.F."/>
            <person name="Phan T.H."/>
            <person name="Chen J.H."/>
            <person name="Davidson M.G."/>
            <person name="Lin F."/>
            <person name="Lin J."/>
            <person name="Carleton H.A."/>
            <person name="Mongodin E.F."/>
            <person name="Sensabaugh G.F."/>
            <person name="Perdreau-Remington F."/>
        </authorList>
    </citation>
    <scope>NUCLEOTIDE SEQUENCE [LARGE SCALE GENOMIC DNA]</scope>
    <source>
        <strain>USA300</strain>
    </source>
</reference>
<accession>Q2FH43</accession>
<evidence type="ECO:0000255" key="1">
    <source>
        <dbReference type="HAMAP-Rule" id="MF_00418"/>
    </source>
</evidence>
<evidence type="ECO:0000305" key="2"/>
<keyword id="KW-0028">Amino-acid biosynthesis</keyword>
<keyword id="KW-0963">Cytoplasm</keyword>
<keyword id="KW-0220">Diaminopimelate biosynthesis</keyword>
<keyword id="KW-0456">Lyase</keyword>
<keyword id="KW-0457">Lysine biosynthesis</keyword>
<keyword id="KW-0704">Schiff base</keyword>
<protein>
    <recommendedName>
        <fullName evidence="1">4-hydroxy-tetrahydrodipicolinate synthase</fullName>
        <shortName evidence="1">HTPA synthase</shortName>
        <ecNumber evidence="1">4.3.3.7</ecNumber>
    </recommendedName>
</protein>
<name>DAPA_STAA3</name>
<gene>
    <name evidence="1" type="primary">dapA</name>
    <name type="ordered locus">SAUSA300_1288</name>
</gene>
<comment type="function">
    <text evidence="1">Catalyzes the condensation of (S)-aspartate-beta-semialdehyde [(S)-ASA] and pyruvate to 4-hydroxy-tetrahydrodipicolinate (HTPA).</text>
</comment>
<comment type="catalytic activity">
    <reaction evidence="1">
        <text>L-aspartate 4-semialdehyde + pyruvate = (2S,4S)-4-hydroxy-2,3,4,5-tetrahydrodipicolinate + H2O + H(+)</text>
        <dbReference type="Rhea" id="RHEA:34171"/>
        <dbReference type="ChEBI" id="CHEBI:15361"/>
        <dbReference type="ChEBI" id="CHEBI:15377"/>
        <dbReference type="ChEBI" id="CHEBI:15378"/>
        <dbReference type="ChEBI" id="CHEBI:67139"/>
        <dbReference type="ChEBI" id="CHEBI:537519"/>
        <dbReference type="EC" id="4.3.3.7"/>
    </reaction>
</comment>
<comment type="pathway">
    <text evidence="1">Amino-acid biosynthesis; L-lysine biosynthesis via DAP pathway; (S)-tetrahydrodipicolinate from L-aspartate: step 3/4.</text>
</comment>
<comment type="subunit">
    <text evidence="1">Homodimer.</text>
</comment>
<comment type="subcellular location">
    <subcellularLocation>
        <location evidence="1">Cytoplasm</location>
    </subcellularLocation>
</comment>
<comment type="similarity">
    <text evidence="1">Belongs to the DapA family.</text>
</comment>
<comment type="caution">
    <text evidence="2">Was originally thought to be a dihydrodipicolinate synthase (DHDPS), catalyzing the condensation of (S)-aspartate-beta-semialdehyde [(S)-ASA] and pyruvate to dihydrodipicolinate (DHDP). However, it was shown in E.coli that the product of the enzymatic reaction is not dihydrodipicolinate but in fact (4S)-4-hydroxy-2,3,4,5-tetrahydro-(2S)-dipicolinic acid (HTPA), and that the consecutive dehydration reaction leading to DHDP is not spontaneous but catalyzed by DapB.</text>
</comment>
<feature type="chain" id="PRO_1000050278" description="4-hydroxy-tetrahydrodipicolinate synthase">
    <location>
        <begin position="1"/>
        <end position="295"/>
    </location>
</feature>
<feature type="active site" description="Proton donor/acceptor" evidence="1">
    <location>
        <position position="135"/>
    </location>
</feature>
<feature type="active site" description="Schiff-base intermediate with substrate" evidence="1">
    <location>
        <position position="163"/>
    </location>
</feature>
<feature type="binding site" evidence="1">
    <location>
        <position position="47"/>
    </location>
    <ligand>
        <name>pyruvate</name>
        <dbReference type="ChEBI" id="CHEBI:15361"/>
    </ligand>
</feature>
<feature type="binding site" evidence="1">
    <location>
        <position position="206"/>
    </location>
    <ligand>
        <name>pyruvate</name>
        <dbReference type="ChEBI" id="CHEBI:15361"/>
    </ligand>
</feature>
<feature type="site" description="Part of a proton relay during catalysis" evidence="1">
    <location>
        <position position="46"/>
    </location>
</feature>
<feature type="site" description="Part of a proton relay during catalysis" evidence="1">
    <location>
        <position position="109"/>
    </location>
</feature>
<dbReference type="EC" id="4.3.3.7" evidence="1"/>
<dbReference type="EMBL" id="CP000255">
    <property type="protein sequence ID" value="ABD20479.1"/>
    <property type="molecule type" value="Genomic_DNA"/>
</dbReference>
<dbReference type="RefSeq" id="WP_000149257.1">
    <property type="nucleotide sequence ID" value="NZ_CP027476.1"/>
</dbReference>
<dbReference type="SMR" id="Q2FH43"/>
<dbReference type="KEGG" id="saa:SAUSA300_1288"/>
<dbReference type="HOGENOM" id="CLU_049343_7_0_9"/>
<dbReference type="OMA" id="GMDACVP"/>
<dbReference type="UniPathway" id="UPA00034">
    <property type="reaction ID" value="UER00017"/>
</dbReference>
<dbReference type="Proteomes" id="UP000001939">
    <property type="component" value="Chromosome"/>
</dbReference>
<dbReference type="GO" id="GO:0005829">
    <property type="term" value="C:cytosol"/>
    <property type="evidence" value="ECO:0007669"/>
    <property type="project" value="TreeGrafter"/>
</dbReference>
<dbReference type="GO" id="GO:0008840">
    <property type="term" value="F:4-hydroxy-tetrahydrodipicolinate synthase activity"/>
    <property type="evidence" value="ECO:0007669"/>
    <property type="project" value="UniProtKB-UniRule"/>
</dbReference>
<dbReference type="GO" id="GO:0019877">
    <property type="term" value="P:diaminopimelate biosynthetic process"/>
    <property type="evidence" value="ECO:0007669"/>
    <property type="project" value="UniProtKB-UniRule"/>
</dbReference>
<dbReference type="GO" id="GO:0009089">
    <property type="term" value="P:lysine biosynthetic process via diaminopimelate"/>
    <property type="evidence" value="ECO:0007669"/>
    <property type="project" value="UniProtKB-UniRule"/>
</dbReference>
<dbReference type="CDD" id="cd00950">
    <property type="entry name" value="DHDPS"/>
    <property type="match status" value="1"/>
</dbReference>
<dbReference type="Gene3D" id="3.20.20.70">
    <property type="entry name" value="Aldolase class I"/>
    <property type="match status" value="1"/>
</dbReference>
<dbReference type="HAMAP" id="MF_00418">
    <property type="entry name" value="DapA"/>
    <property type="match status" value="1"/>
</dbReference>
<dbReference type="InterPro" id="IPR013785">
    <property type="entry name" value="Aldolase_TIM"/>
</dbReference>
<dbReference type="InterPro" id="IPR005263">
    <property type="entry name" value="DapA"/>
</dbReference>
<dbReference type="InterPro" id="IPR002220">
    <property type="entry name" value="DapA-like"/>
</dbReference>
<dbReference type="InterPro" id="IPR020625">
    <property type="entry name" value="Schiff_base-form_aldolases_AS"/>
</dbReference>
<dbReference type="NCBIfam" id="TIGR00674">
    <property type="entry name" value="dapA"/>
    <property type="match status" value="1"/>
</dbReference>
<dbReference type="PANTHER" id="PTHR12128:SF66">
    <property type="entry name" value="4-HYDROXY-2-OXOGLUTARATE ALDOLASE, MITOCHONDRIAL"/>
    <property type="match status" value="1"/>
</dbReference>
<dbReference type="PANTHER" id="PTHR12128">
    <property type="entry name" value="DIHYDRODIPICOLINATE SYNTHASE"/>
    <property type="match status" value="1"/>
</dbReference>
<dbReference type="Pfam" id="PF00701">
    <property type="entry name" value="DHDPS"/>
    <property type="match status" value="1"/>
</dbReference>
<dbReference type="PIRSF" id="PIRSF001365">
    <property type="entry name" value="DHDPS"/>
    <property type="match status" value="1"/>
</dbReference>
<dbReference type="PRINTS" id="PR00146">
    <property type="entry name" value="DHPICSNTHASE"/>
</dbReference>
<dbReference type="SMART" id="SM01130">
    <property type="entry name" value="DHDPS"/>
    <property type="match status" value="1"/>
</dbReference>
<dbReference type="SUPFAM" id="SSF51569">
    <property type="entry name" value="Aldolase"/>
    <property type="match status" value="1"/>
</dbReference>
<dbReference type="PROSITE" id="PS00666">
    <property type="entry name" value="DHDPS_2"/>
    <property type="match status" value="1"/>
</dbReference>
<organism>
    <name type="scientific">Staphylococcus aureus (strain USA300)</name>
    <dbReference type="NCBI Taxonomy" id="367830"/>
    <lineage>
        <taxon>Bacteria</taxon>
        <taxon>Bacillati</taxon>
        <taxon>Bacillota</taxon>
        <taxon>Bacilli</taxon>
        <taxon>Bacillales</taxon>
        <taxon>Staphylococcaceae</taxon>
        <taxon>Staphylococcus</taxon>
    </lineage>
</organism>